<protein>
    <recommendedName>
        <fullName evidence="1">Ketol-acid reductoisomerase (NADP(+))</fullName>
        <shortName evidence="1">KARI</shortName>
        <ecNumber evidence="1">1.1.1.86</ecNumber>
    </recommendedName>
    <alternativeName>
        <fullName evidence="1">Acetohydroxy-acid isomeroreductase</fullName>
        <shortName evidence="1">AHIR</shortName>
    </alternativeName>
    <alternativeName>
        <fullName evidence="1">Alpha-keto-beta-hydroxylacyl reductoisomerase</fullName>
    </alternativeName>
    <alternativeName>
        <fullName evidence="1">Ketol-acid reductoisomerase type 1</fullName>
    </alternativeName>
    <alternativeName>
        <fullName evidence="1">Ketol-acid reductoisomerase type I</fullName>
    </alternativeName>
</protein>
<accession>Q5YRW2</accession>
<proteinExistence type="inferred from homology"/>
<organism>
    <name type="scientific">Nocardia farcinica (strain IFM 10152)</name>
    <dbReference type="NCBI Taxonomy" id="247156"/>
    <lineage>
        <taxon>Bacteria</taxon>
        <taxon>Bacillati</taxon>
        <taxon>Actinomycetota</taxon>
        <taxon>Actinomycetes</taxon>
        <taxon>Mycobacteriales</taxon>
        <taxon>Nocardiaceae</taxon>
        <taxon>Nocardia</taxon>
    </lineage>
</organism>
<dbReference type="EC" id="1.1.1.86" evidence="1"/>
<dbReference type="EMBL" id="AP006618">
    <property type="protein sequence ID" value="BAD59079.1"/>
    <property type="molecule type" value="Genomic_DNA"/>
</dbReference>
<dbReference type="SMR" id="Q5YRW2"/>
<dbReference type="STRING" id="247156.NFA_42300"/>
<dbReference type="KEGG" id="nfa:NFA_42300"/>
<dbReference type="eggNOG" id="COG0059">
    <property type="taxonomic scope" value="Bacteria"/>
</dbReference>
<dbReference type="HOGENOM" id="CLU_033821_0_1_11"/>
<dbReference type="OrthoDB" id="9804088at2"/>
<dbReference type="UniPathway" id="UPA00047">
    <property type="reaction ID" value="UER00056"/>
</dbReference>
<dbReference type="UniPathway" id="UPA00049">
    <property type="reaction ID" value="UER00060"/>
</dbReference>
<dbReference type="Proteomes" id="UP000006820">
    <property type="component" value="Chromosome"/>
</dbReference>
<dbReference type="GO" id="GO:0005829">
    <property type="term" value="C:cytosol"/>
    <property type="evidence" value="ECO:0007669"/>
    <property type="project" value="TreeGrafter"/>
</dbReference>
<dbReference type="GO" id="GO:0004455">
    <property type="term" value="F:ketol-acid reductoisomerase activity"/>
    <property type="evidence" value="ECO:0007669"/>
    <property type="project" value="UniProtKB-UniRule"/>
</dbReference>
<dbReference type="GO" id="GO:0000287">
    <property type="term" value="F:magnesium ion binding"/>
    <property type="evidence" value="ECO:0007669"/>
    <property type="project" value="UniProtKB-UniRule"/>
</dbReference>
<dbReference type="GO" id="GO:0050661">
    <property type="term" value="F:NADP binding"/>
    <property type="evidence" value="ECO:0007669"/>
    <property type="project" value="InterPro"/>
</dbReference>
<dbReference type="GO" id="GO:0009097">
    <property type="term" value="P:isoleucine biosynthetic process"/>
    <property type="evidence" value="ECO:0007669"/>
    <property type="project" value="UniProtKB-UniRule"/>
</dbReference>
<dbReference type="GO" id="GO:0009099">
    <property type="term" value="P:L-valine biosynthetic process"/>
    <property type="evidence" value="ECO:0007669"/>
    <property type="project" value="UniProtKB-UniRule"/>
</dbReference>
<dbReference type="FunFam" id="3.40.50.720:FF:000023">
    <property type="entry name" value="Ketol-acid reductoisomerase (NADP(+))"/>
    <property type="match status" value="1"/>
</dbReference>
<dbReference type="Gene3D" id="6.10.240.10">
    <property type="match status" value="1"/>
</dbReference>
<dbReference type="Gene3D" id="3.40.50.720">
    <property type="entry name" value="NAD(P)-binding Rossmann-like Domain"/>
    <property type="match status" value="1"/>
</dbReference>
<dbReference type="HAMAP" id="MF_00435">
    <property type="entry name" value="IlvC"/>
    <property type="match status" value="1"/>
</dbReference>
<dbReference type="InterPro" id="IPR008927">
    <property type="entry name" value="6-PGluconate_DH-like_C_sf"/>
</dbReference>
<dbReference type="InterPro" id="IPR013023">
    <property type="entry name" value="KARI"/>
</dbReference>
<dbReference type="InterPro" id="IPR000506">
    <property type="entry name" value="KARI_C"/>
</dbReference>
<dbReference type="InterPro" id="IPR013116">
    <property type="entry name" value="KARI_N"/>
</dbReference>
<dbReference type="InterPro" id="IPR014359">
    <property type="entry name" value="KARI_prok"/>
</dbReference>
<dbReference type="InterPro" id="IPR036291">
    <property type="entry name" value="NAD(P)-bd_dom_sf"/>
</dbReference>
<dbReference type="NCBIfam" id="TIGR00465">
    <property type="entry name" value="ilvC"/>
    <property type="match status" value="1"/>
</dbReference>
<dbReference type="NCBIfam" id="NF004017">
    <property type="entry name" value="PRK05479.1"/>
    <property type="match status" value="1"/>
</dbReference>
<dbReference type="NCBIfam" id="NF009940">
    <property type="entry name" value="PRK13403.1"/>
    <property type="match status" value="1"/>
</dbReference>
<dbReference type="PANTHER" id="PTHR21371">
    <property type="entry name" value="KETOL-ACID REDUCTOISOMERASE, MITOCHONDRIAL"/>
    <property type="match status" value="1"/>
</dbReference>
<dbReference type="PANTHER" id="PTHR21371:SF1">
    <property type="entry name" value="KETOL-ACID REDUCTOISOMERASE, MITOCHONDRIAL"/>
    <property type="match status" value="1"/>
</dbReference>
<dbReference type="Pfam" id="PF01450">
    <property type="entry name" value="KARI_C"/>
    <property type="match status" value="1"/>
</dbReference>
<dbReference type="Pfam" id="PF07991">
    <property type="entry name" value="KARI_N"/>
    <property type="match status" value="1"/>
</dbReference>
<dbReference type="PIRSF" id="PIRSF000116">
    <property type="entry name" value="IlvC_gammaproteo"/>
    <property type="match status" value="1"/>
</dbReference>
<dbReference type="SUPFAM" id="SSF48179">
    <property type="entry name" value="6-phosphogluconate dehydrogenase C-terminal domain-like"/>
    <property type="match status" value="1"/>
</dbReference>
<dbReference type="SUPFAM" id="SSF51735">
    <property type="entry name" value="NAD(P)-binding Rossmann-fold domains"/>
    <property type="match status" value="1"/>
</dbReference>
<dbReference type="PROSITE" id="PS51851">
    <property type="entry name" value="KARI_C"/>
    <property type="match status" value="1"/>
</dbReference>
<dbReference type="PROSITE" id="PS51850">
    <property type="entry name" value="KARI_N"/>
    <property type="match status" value="1"/>
</dbReference>
<feature type="chain" id="PRO_0000226186" description="Ketol-acid reductoisomerase (NADP(+))">
    <location>
        <begin position="1"/>
        <end position="337"/>
    </location>
</feature>
<feature type="domain" description="KARI N-terminal Rossmann" evidence="2">
    <location>
        <begin position="3"/>
        <end position="183"/>
    </location>
</feature>
<feature type="domain" description="KARI C-terminal knotted" evidence="3">
    <location>
        <begin position="184"/>
        <end position="329"/>
    </location>
</feature>
<feature type="active site" evidence="1">
    <location>
        <position position="109"/>
    </location>
</feature>
<feature type="binding site" evidence="1">
    <location>
        <begin position="26"/>
        <end position="29"/>
    </location>
    <ligand>
        <name>NADP(+)</name>
        <dbReference type="ChEBI" id="CHEBI:58349"/>
    </ligand>
</feature>
<feature type="binding site" evidence="1">
    <location>
        <position position="52"/>
    </location>
    <ligand>
        <name>NADP(+)</name>
        <dbReference type="ChEBI" id="CHEBI:58349"/>
    </ligand>
</feature>
<feature type="binding site" evidence="1">
    <location>
        <position position="54"/>
    </location>
    <ligand>
        <name>NADP(+)</name>
        <dbReference type="ChEBI" id="CHEBI:58349"/>
    </ligand>
</feature>
<feature type="binding site" evidence="1">
    <location>
        <begin position="84"/>
        <end position="87"/>
    </location>
    <ligand>
        <name>NADP(+)</name>
        <dbReference type="ChEBI" id="CHEBI:58349"/>
    </ligand>
</feature>
<feature type="binding site" evidence="1">
    <location>
        <position position="135"/>
    </location>
    <ligand>
        <name>NADP(+)</name>
        <dbReference type="ChEBI" id="CHEBI:58349"/>
    </ligand>
</feature>
<feature type="binding site" evidence="1">
    <location>
        <position position="192"/>
    </location>
    <ligand>
        <name>Mg(2+)</name>
        <dbReference type="ChEBI" id="CHEBI:18420"/>
        <label>1</label>
    </ligand>
</feature>
<feature type="binding site" evidence="1">
    <location>
        <position position="192"/>
    </location>
    <ligand>
        <name>Mg(2+)</name>
        <dbReference type="ChEBI" id="CHEBI:18420"/>
        <label>2</label>
    </ligand>
</feature>
<feature type="binding site" evidence="1">
    <location>
        <position position="196"/>
    </location>
    <ligand>
        <name>Mg(2+)</name>
        <dbReference type="ChEBI" id="CHEBI:18420"/>
        <label>1</label>
    </ligand>
</feature>
<feature type="binding site" evidence="1">
    <location>
        <position position="228"/>
    </location>
    <ligand>
        <name>Mg(2+)</name>
        <dbReference type="ChEBI" id="CHEBI:18420"/>
        <label>2</label>
    </ligand>
</feature>
<feature type="binding site" evidence="1">
    <location>
        <position position="232"/>
    </location>
    <ligand>
        <name>Mg(2+)</name>
        <dbReference type="ChEBI" id="CHEBI:18420"/>
        <label>2</label>
    </ligand>
</feature>
<feature type="binding site" evidence="1">
    <location>
        <position position="253"/>
    </location>
    <ligand>
        <name>substrate</name>
    </ligand>
</feature>
<comment type="function">
    <text evidence="1">Involved in the biosynthesis of branched-chain amino acids (BCAA). Catalyzes an alkyl-migration followed by a ketol-acid reduction of (S)-2-acetolactate (S2AL) to yield (R)-2,3-dihydroxy-isovalerate. In the isomerase reaction, S2AL is rearranged via a Mg-dependent methyl migration to produce 3-hydroxy-3-methyl-2-ketobutyrate (HMKB). In the reductase reaction, this 2-ketoacid undergoes a metal-dependent reduction by NADPH to yield (R)-2,3-dihydroxy-isovalerate.</text>
</comment>
<comment type="catalytic activity">
    <reaction evidence="1">
        <text>(2R)-2,3-dihydroxy-3-methylbutanoate + NADP(+) = (2S)-2-acetolactate + NADPH + H(+)</text>
        <dbReference type="Rhea" id="RHEA:22068"/>
        <dbReference type="ChEBI" id="CHEBI:15378"/>
        <dbReference type="ChEBI" id="CHEBI:49072"/>
        <dbReference type="ChEBI" id="CHEBI:57783"/>
        <dbReference type="ChEBI" id="CHEBI:58349"/>
        <dbReference type="ChEBI" id="CHEBI:58476"/>
        <dbReference type="EC" id="1.1.1.86"/>
    </reaction>
</comment>
<comment type="catalytic activity">
    <reaction evidence="1">
        <text>(2R,3R)-2,3-dihydroxy-3-methylpentanoate + NADP(+) = (S)-2-ethyl-2-hydroxy-3-oxobutanoate + NADPH + H(+)</text>
        <dbReference type="Rhea" id="RHEA:13493"/>
        <dbReference type="ChEBI" id="CHEBI:15378"/>
        <dbReference type="ChEBI" id="CHEBI:49256"/>
        <dbReference type="ChEBI" id="CHEBI:49258"/>
        <dbReference type="ChEBI" id="CHEBI:57783"/>
        <dbReference type="ChEBI" id="CHEBI:58349"/>
        <dbReference type="EC" id="1.1.1.86"/>
    </reaction>
</comment>
<comment type="cofactor">
    <cofactor evidence="1">
        <name>Mg(2+)</name>
        <dbReference type="ChEBI" id="CHEBI:18420"/>
    </cofactor>
    <text evidence="1">Binds 2 magnesium ions per subunit.</text>
</comment>
<comment type="pathway">
    <text evidence="1">Amino-acid biosynthesis; L-isoleucine biosynthesis; L-isoleucine from 2-oxobutanoate: step 2/4.</text>
</comment>
<comment type="pathway">
    <text evidence="1">Amino-acid biosynthesis; L-valine biosynthesis; L-valine from pyruvate: step 2/4.</text>
</comment>
<comment type="similarity">
    <text evidence="1">Belongs to the ketol-acid reductoisomerase family.</text>
</comment>
<reference key="1">
    <citation type="journal article" date="2004" name="Proc. Natl. Acad. Sci. U.S.A.">
        <title>The complete genomic sequence of Nocardia farcinica IFM 10152.</title>
        <authorList>
            <person name="Ishikawa J."/>
            <person name="Yamashita A."/>
            <person name="Mikami Y."/>
            <person name="Hoshino Y."/>
            <person name="Kurita H."/>
            <person name="Hotta K."/>
            <person name="Shiba T."/>
            <person name="Hattori M."/>
        </authorList>
    </citation>
    <scope>NUCLEOTIDE SEQUENCE [LARGE SCALE GENOMIC DNA]</scope>
    <source>
        <strain>IFM 10152</strain>
    </source>
</reference>
<keyword id="KW-0028">Amino-acid biosynthesis</keyword>
<keyword id="KW-0100">Branched-chain amino acid biosynthesis</keyword>
<keyword id="KW-0460">Magnesium</keyword>
<keyword id="KW-0479">Metal-binding</keyword>
<keyword id="KW-0521">NADP</keyword>
<keyword id="KW-0560">Oxidoreductase</keyword>
<keyword id="KW-1185">Reference proteome</keyword>
<sequence length="337" mass="36103">MAVEMFYDDDADLSIIQGRKVAVIGYGSQGHAHSLSLRDSGVEVRVGLAEGSKSRPKAEEAGLTVGTPAEVSAWADVIMLLAPDTAQASIFTNDIEPNLKDGDALFFGHGLNIHFGLIKPPANVTIGMVAPKGPGHLVRRQFVDGKGVPALIAIDQDPKGEGQALALSYAKGIGGTRAGVIKTTFKEETETDLFGEQAVLCGGTEELVKTGFEVMVEAGYAPEMAYFEVLHELKLIVDLMYEGGIARMNYSVSDTAEFGGYLSGPRVIDAGTKERMKEILKDIQDGTFVKRLVANVEGGNKELEGLRKQNAEHPIEVTGAKLRGLMSWVDRPITETA</sequence>
<evidence type="ECO:0000255" key="1">
    <source>
        <dbReference type="HAMAP-Rule" id="MF_00435"/>
    </source>
</evidence>
<evidence type="ECO:0000255" key="2">
    <source>
        <dbReference type="PROSITE-ProRule" id="PRU01197"/>
    </source>
</evidence>
<evidence type="ECO:0000255" key="3">
    <source>
        <dbReference type="PROSITE-ProRule" id="PRU01198"/>
    </source>
</evidence>
<name>ILVC_NOCFA</name>
<gene>
    <name evidence="1" type="primary">ilvC</name>
    <name type="ordered locus">NFA_42300</name>
</gene>